<evidence type="ECO:0000255" key="1">
    <source>
        <dbReference type="HAMAP-Rule" id="MF_00111"/>
    </source>
</evidence>
<feature type="chain" id="PRO_0000178879" description="UDP-N-acetylglucosamine 1-carboxyvinyltransferase 1">
    <location>
        <begin position="1"/>
        <end position="427"/>
    </location>
</feature>
<feature type="active site" description="Proton donor" evidence="1">
    <location>
        <position position="121"/>
    </location>
</feature>
<feature type="binding site" evidence="1">
    <location>
        <begin position="24"/>
        <end position="25"/>
    </location>
    <ligand>
        <name>phosphoenolpyruvate</name>
        <dbReference type="ChEBI" id="CHEBI:58702"/>
    </ligand>
</feature>
<feature type="binding site" evidence="1">
    <location>
        <position position="97"/>
    </location>
    <ligand>
        <name>UDP-N-acetyl-alpha-D-glucosamine</name>
        <dbReference type="ChEBI" id="CHEBI:57705"/>
    </ligand>
</feature>
<feature type="binding site" evidence="1">
    <location>
        <begin position="126"/>
        <end position="130"/>
    </location>
    <ligand>
        <name>UDP-N-acetyl-alpha-D-glucosamine</name>
        <dbReference type="ChEBI" id="CHEBI:57705"/>
    </ligand>
</feature>
<feature type="binding site" evidence="1">
    <location>
        <position position="309"/>
    </location>
    <ligand>
        <name>UDP-N-acetyl-alpha-D-glucosamine</name>
        <dbReference type="ChEBI" id="CHEBI:57705"/>
    </ligand>
</feature>
<feature type="binding site" evidence="1">
    <location>
        <position position="331"/>
    </location>
    <ligand>
        <name>UDP-N-acetyl-alpha-D-glucosamine</name>
        <dbReference type="ChEBI" id="CHEBI:57705"/>
    </ligand>
</feature>
<feature type="modified residue" description="2-(S-cysteinyl)pyruvic acid O-phosphothioketal" evidence="1">
    <location>
        <position position="121"/>
    </location>
</feature>
<comment type="function">
    <text evidence="1">Cell wall formation. Adds enolpyruvyl to UDP-N-acetylglucosamine.</text>
</comment>
<comment type="catalytic activity">
    <reaction evidence="1">
        <text>phosphoenolpyruvate + UDP-N-acetyl-alpha-D-glucosamine = UDP-N-acetyl-3-O-(1-carboxyvinyl)-alpha-D-glucosamine + phosphate</text>
        <dbReference type="Rhea" id="RHEA:18681"/>
        <dbReference type="ChEBI" id="CHEBI:43474"/>
        <dbReference type="ChEBI" id="CHEBI:57705"/>
        <dbReference type="ChEBI" id="CHEBI:58702"/>
        <dbReference type="ChEBI" id="CHEBI:68483"/>
        <dbReference type="EC" id="2.5.1.7"/>
    </reaction>
</comment>
<comment type="pathway">
    <text evidence="1">Cell wall biogenesis; peptidoglycan biosynthesis.</text>
</comment>
<comment type="subcellular location">
    <subcellularLocation>
        <location evidence="1">Cytoplasm</location>
    </subcellularLocation>
</comment>
<comment type="similarity">
    <text evidence="1">Belongs to the EPSP synthase family. MurA subfamily.</text>
</comment>
<proteinExistence type="inferred from homology"/>
<reference key="1">
    <citation type="journal article" date="2001" name="Genome Res.">
        <title>The complete genome sequence of the lactic acid bacterium Lactococcus lactis ssp. lactis IL1403.</title>
        <authorList>
            <person name="Bolotin A."/>
            <person name="Wincker P."/>
            <person name="Mauger S."/>
            <person name="Jaillon O."/>
            <person name="Malarme K."/>
            <person name="Weissenbach J."/>
            <person name="Ehrlich S.D."/>
            <person name="Sorokin A."/>
        </authorList>
    </citation>
    <scope>NUCLEOTIDE SEQUENCE [LARGE SCALE GENOMIC DNA]</scope>
    <source>
        <strain>IL1403</strain>
    </source>
</reference>
<keyword id="KW-0131">Cell cycle</keyword>
<keyword id="KW-0132">Cell division</keyword>
<keyword id="KW-0133">Cell shape</keyword>
<keyword id="KW-0961">Cell wall biogenesis/degradation</keyword>
<keyword id="KW-0963">Cytoplasm</keyword>
<keyword id="KW-0573">Peptidoglycan synthesis</keyword>
<keyword id="KW-0670">Pyruvate</keyword>
<keyword id="KW-1185">Reference proteome</keyword>
<keyword id="KW-0808">Transferase</keyword>
<gene>
    <name evidence="1" type="primary">murA1</name>
    <name type="synonym">murA</name>
    <name type="ordered locus">LL0549</name>
    <name type="ORF">L134243</name>
</gene>
<protein>
    <recommendedName>
        <fullName evidence="1">UDP-N-acetylglucosamine 1-carboxyvinyltransferase 1</fullName>
        <ecNumber evidence="1">2.5.1.7</ecNumber>
    </recommendedName>
    <alternativeName>
        <fullName evidence="1">Enoylpyruvate transferase 1</fullName>
    </alternativeName>
    <alternativeName>
        <fullName evidence="1">UDP-N-acetylglucosamine enolpyruvyl transferase 1</fullName>
        <shortName evidence="1">EPT 1</shortName>
    </alternativeName>
</protein>
<sequence>MMDKIIVKGGQTKLQGEVEIEGAKNAVLPLLAATLLASEGEVVLTNVPILSDVFMMNNLVNHLGTAISFDQEAKKIIAKSNSEIKTTAPYEYVSKMRASIVVMGPILARNGQARVSMPGGCSIGSRPIDLHLRGFEQMGATITQNAGYIEAKADKLKGAHIYLDFPSVGATQNLILAATLADGTTTLENAAREPEIVDLANLLNKMGANVKGAGTDTIIIKGVEKMHGANHSVVQDRIEAGTFMVAAAMTQGDVLIKDAIAEHNRPLISKLSEMGVNFIQEESGLRVVGPEKLKATSVKTLPHPGFPTDMQSQMTAAQAVAVGESVMVETVFENRFQHLKEMRRIGLEVDITRNTALIQGNSNLQGAAVKSTDLRASAALILLGLVAKGQTTVRRLSHLDRGYYKFHEKLKALGADIIRVEDEDGEG</sequence>
<accession>Q9CI17</accession>
<dbReference type="EC" id="2.5.1.7" evidence="1"/>
<dbReference type="EMBL" id="AE005176">
    <property type="protein sequence ID" value="AAK04647.1"/>
    <property type="molecule type" value="Genomic_DNA"/>
</dbReference>
<dbReference type="PIR" id="E86693">
    <property type="entry name" value="E86693"/>
</dbReference>
<dbReference type="RefSeq" id="NP_266705.1">
    <property type="nucleotide sequence ID" value="NC_002662.1"/>
</dbReference>
<dbReference type="SMR" id="Q9CI17"/>
<dbReference type="PaxDb" id="272623-L134243"/>
<dbReference type="EnsemblBacteria" id="AAK04647">
    <property type="protein sequence ID" value="AAK04647"/>
    <property type="gene ID" value="L134243"/>
</dbReference>
<dbReference type="KEGG" id="lla:L134243"/>
<dbReference type="PATRIC" id="fig|272623.7.peg.587"/>
<dbReference type="eggNOG" id="COG0766">
    <property type="taxonomic scope" value="Bacteria"/>
</dbReference>
<dbReference type="HOGENOM" id="CLU_027387_0_0_9"/>
<dbReference type="OrthoDB" id="9803760at2"/>
<dbReference type="UniPathway" id="UPA00219"/>
<dbReference type="Proteomes" id="UP000002196">
    <property type="component" value="Chromosome"/>
</dbReference>
<dbReference type="GO" id="GO:0005737">
    <property type="term" value="C:cytoplasm"/>
    <property type="evidence" value="ECO:0007669"/>
    <property type="project" value="UniProtKB-SubCell"/>
</dbReference>
<dbReference type="GO" id="GO:0008760">
    <property type="term" value="F:UDP-N-acetylglucosamine 1-carboxyvinyltransferase activity"/>
    <property type="evidence" value="ECO:0007669"/>
    <property type="project" value="UniProtKB-UniRule"/>
</dbReference>
<dbReference type="GO" id="GO:0051301">
    <property type="term" value="P:cell division"/>
    <property type="evidence" value="ECO:0007669"/>
    <property type="project" value="UniProtKB-KW"/>
</dbReference>
<dbReference type="GO" id="GO:0071555">
    <property type="term" value="P:cell wall organization"/>
    <property type="evidence" value="ECO:0007669"/>
    <property type="project" value="UniProtKB-KW"/>
</dbReference>
<dbReference type="GO" id="GO:0009252">
    <property type="term" value="P:peptidoglycan biosynthetic process"/>
    <property type="evidence" value="ECO:0007669"/>
    <property type="project" value="UniProtKB-UniRule"/>
</dbReference>
<dbReference type="GO" id="GO:0008360">
    <property type="term" value="P:regulation of cell shape"/>
    <property type="evidence" value="ECO:0007669"/>
    <property type="project" value="UniProtKB-KW"/>
</dbReference>
<dbReference type="GO" id="GO:0019277">
    <property type="term" value="P:UDP-N-acetylgalactosamine biosynthetic process"/>
    <property type="evidence" value="ECO:0007669"/>
    <property type="project" value="InterPro"/>
</dbReference>
<dbReference type="CDD" id="cd01555">
    <property type="entry name" value="UdpNAET"/>
    <property type="match status" value="1"/>
</dbReference>
<dbReference type="FunFam" id="3.65.10.10:FF:000001">
    <property type="entry name" value="UDP-N-acetylglucosamine 1-carboxyvinyltransferase"/>
    <property type="match status" value="1"/>
</dbReference>
<dbReference type="Gene3D" id="3.65.10.10">
    <property type="entry name" value="Enolpyruvate transferase domain"/>
    <property type="match status" value="2"/>
</dbReference>
<dbReference type="HAMAP" id="MF_00111">
    <property type="entry name" value="MurA"/>
    <property type="match status" value="1"/>
</dbReference>
<dbReference type="InterPro" id="IPR001986">
    <property type="entry name" value="Enolpyruvate_Tfrase_dom"/>
</dbReference>
<dbReference type="InterPro" id="IPR036968">
    <property type="entry name" value="Enolpyruvate_Tfrase_sf"/>
</dbReference>
<dbReference type="InterPro" id="IPR050068">
    <property type="entry name" value="MurA_subfamily"/>
</dbReference>
<dbReference type="InterPro" id="IPR013792">
    <property type="entry name" value="RNA3'P_cycl/enolpyr_Trfase_a/b"/>
</dbReference>
<dbReference type="InterPro" id="IPR005750">
    <property type="entry name" value="UDP_GlcNAc_COvinyl_MurA"/>
</dbReference>
<dbReference type="NCBIfam" id="TIGR01072">
    <property type="entry name" value="murA"/>
    <property type="match status" value="1"/>
</dbReference>
<dbReference type="NCBIfam" id="NF006873">
    <property type="entry name" value="PRK09369.1"/>
    <property type="match status" value="1"/>
</dbReference>
<dbReference type="PANTHER" id="PTHR43783">
    <property type="entry name" value="UDP-N-ACETYLGLUCOSAMINE 1-CARBOXYVINYLTRANSFERASE"/>
    <property type="match status" value="1"/>
</dbReference>
<dbReference type="PANTHER" id="PTHR43783:SF1">
    <property type="entry name" value="UDP-N-ACETYLGLUCOSAMINE 1-CARBOXYVINYLTRANSFERASE"/>
    <property type="match status" value="1"/>
</dbReference>
<dbReference type="Pfam" id="PF00275">
    <property type="entry name" value="EPSP_synthase"/>
    <property type="match status" value="1"/>
</dbReference>
<dbReference type="SUPFAM" id="SSF55205">
    <property type="entry name" value="EPT/RTPC-like"/>
    <property type="match status" value="1"/>
</dbReference>
<name>MURA1_LACLA</name>
<organism>
    <name type="scientific">Lactococcus lactis subsp. lactis (strain IL1403)</name>
    <name type="common">Streptococcus lactis</name>
    <dbReference type="NCBI Taxonomy" id="272623"/>
    <lineage>
        <taxon>Bacteria</taxon>
        <taxon>Bacillati</taxon>
        <taxon>Bacillota</taxon>
        <taxon>Bacilli</taxon>
        <taxon>Lactobacillales</taxon>
        <taxon>Streptococcaceae</taxon>
        <taxon>Lactococcus</taxon>
    </lineage>
</organism>